<feature type="chain" id="PRO_0000167974" description="Small ribosomal subunit protein bS20">
    <location>
        <begin position="1" status="less than"/>
        <end position="72" status="greater than"/>
    </location>
</feature>
<feature type="non-terminal residue">
    <location>
        <position position="1"/>
    </location>
</feature>
<feature type="non-terminal residue">
    <location>
        <position position="72"/>
    </location>
</feature>
<reference key="1">
    <citation type="journal article" date="1995" name="Biochim. Biophys. Acta">
        <title>Conserved amino acid residues in the primary structure of ribosomal protein S20 from selected Gram-negative bacteria.</title>
        <authorList>
            <person name="Nemec A."/>
            <person name="Haywood-Farmer A."/>
            <person name="Mackie G.A."/>
        </authorList>
    </citation>
    <scope>NUCLEOTIDE SEQUENCE [GENOMIC DNA]</scope>
</reference>
<organism>
    <name type="scientific">Klebsiella pneumoniae</name>
    <dbReference type="NCBI Taxonomy" id="573"/>
    <lineage>
        <taxon>Bacteria</taxon>
        <taxon>Pseudomonadati</taxon>
        <taxon>Pseudomonadota</taxon>
        <taxon>Gammaproteobacteria</taxon>
        <taxon>Enterobacterales</taxon>
        <taxon>Enterobacteriaceae</taxon>
        <taxon>Klebsiella/Raoultella group</taxon>
        <taxon>Klebsiella</taxon>
        <taxon>Klebsiella pneumoniae complex</taxon>
    </lineage>
</organism>
<protein>
    <recommendedName>
        <fullName evidence="2">Small ribosomal subunit protein bS20</fullName>
    </recommendedName>
    <alternativeName>
        <fullName>30S ribosomal protein S20</fullName>
    </alternativeName>
</protein>
<dbReference type="EMBL" id="U20493">
    <property type="protein sequence ID" value="AAA86999.1"/>
    <property type="molecule type" value="Genomic_DNA"/>
</dbReference>
<dbReference type="PIR" id="S58762">
    <property type="entry name" value="S58762"/>
</dbReference>
<dbReference type="SMR" id="P45601"/>
<dbReference type="GO" id="GO:0005829">
    <property type="term" value="C:cytosol"/>
    <property type="evidence" value="ECO:0007669"/>
    <property type="project" value="TreeGrafter"/>
</dbReference>
<dbReference type="GO" id="GO:0015935">
    <property type="term" value="C:small ribosomal subunit"/>
    <property type="evidence" value="ECO:0007669"/>
    <property type="project" value="TreeGrafter"/>
</dbReference>
<dbReference type="GO" id="GO:0070181">
    <property type="term" value="F:small ribosomal subunit rRNA binding"/>
    <property type="evidence" value="ECO:0007669"/>
    <property type="project" value="TreeGrafter"/>
</dbReference>
<dbReference type="GO" id="GO:0003735">
    <property type="term" value="F:structural constituent of ribosome"/>
    <property type="evidence" value="ECO:0007669"/>
    <property type="project" value="InterPro"/>
</dbReference>
<dbReference type="GO" id="GO:0006412">
    <property type="term" value="P:translation"/>
    <property type="evidence" value="ECO:0007669"/>
    <property type="project" value="InterPro"/>
</dbReference>
<dbReference type="FunFam" id="1.20.58.110:FF:000001">
    <property type="entry name" value="30S ribosomal protein S20"/>
    <property type="match status" value="1"/>
</dbReference>
<dbReference type="Gene3D" id="1.20.58.110">
    <property type="entry name" value="Ribosomal protein S20"/>
    <property type="match status" value="1"/>
</dbReference>
<dbReference type="InterPro" id="IPR002583">
    <property type="entry name" value="Ribosomal_bS20"/>
</dbReference>
<dbReference type="InterPro" id="IPR036510">
    <property type="entry name" value="Ribosomal_bS20_sf"/>
</dbReference>
<dbReference type="NCBIfam" id="TIGR00029">
    <property type="entry name" value="S20"/>
    <property type="match status" value="1"/>
</dbReference>
<dbReference type="PANTHER" id="PTHR33398">
    <property type="entry name" value="30S RIBOSOMAL PROTEIN S20"/>
    <property type="match status" value="1"/>
</dbReference>
<dbReference type="PANTHER" id="PTHR33398:SF1">
    <property type="entry name" value="SMALL RIBOSOMAL SUBUNIT PROTEIN BS20C"/>
    <property type="match status" value="1"/>
</dbReference>
<dbReference type="Pfam" id="PF01649">
    <property type="entry name" value="Ribosomal_S20p"/>
    <property type="match status" value="1"/>
</dbReference>
<dbReference type="SUPFAM" id="SSF46992">
    <property type="entry name" value="Ribosomal protein S20"/>
    <property type="match status" value="1"/>
</dbReference>
<evidence type="ECO:0000250" key="1"/>
<evidence type="ECO:0000305" key="2"/>
<name>RS20_KLEPN</name>
<gene>
    <name type="primary">rpsT</name>
</gene>
<accession>P45601</accession>
<keyword id="KW-0687">Ribonucleoprotein</keyword>
<keyword id="KW-0689">Ribosomal protein</keyword>
<keyword id="KW-0694">RNA-binding</keyword>
<keyword id="KW-0699">rRNA-binding</keyword>
<sequence length="72" mass="8173">KRAVQSEKARKHNASRRSMMRTFIKKVYAAIEAGDKAAAQKAFNEMQPIVDRQAAKGLIHKNKRARHKANLT</sequence>
<comment type="function">
    <text evidence="1">Binds directly to 16S ribosomal RNA.</text>
</comment>
<comment type="similarity">
    <text evidence="2">Belongs to the bacterial ribosomal protein bS20 family.</text>
</comment>
<proteinExistence type="inferred from homology"/>